<reference key="1">
    <citation type="journal article" date="2006" name="Proc. Natl. Acad. Sci. U.S.A.">
        <title>Burkholderia xenovorans LB400 harbors a multi-replicon, 9.73-Mbp genome shaped for versatility.</title>
        <authorList>
            <person name="Chain P.S.G."/>
            <person name="Denef V.J."/>
            <person name="Konstantinidis K.T."/>
            <person name="Vergez L.M."/>
            <person name="Agullo L."/>
            <person name="Reyes V.L."/>
            <person name="Hauser L."/>
            <person name="Cordova M."/>
            <person name="Gomez L."/>
            <person name="Gonzalez M."/>
            <person name="Land M."/>
            <person name="Lao V."/>
            <person name="Larimer F."/>
            <person name="LiPuma J.J."/>
            <person name="Mahenthiralingam E."/>
            <person name="Malfatti S.A."/>
            <person name="Marx C.J."/>
            <person name="Parnell J.J."/>
            <person name="Ramette A."/>
            <person name="Richardson P."/>
            <person name="Seeger M."/>
            <person name="Smith D."/>
            <person name="Spilker T."/>
            <person name="Sul W.J."/>
            <person name="Tsoi T.V."/>
            <person name="Ulrich L.E."/>
            <person name="Zhulin I.B."/>
            <person name="Tiedje J.M."/>
        </authorList>
    </citation>
    <scope>NUCLEOTIDE SEQUENCE [LARGE SCALE GENOMIC DNA]</scope>
    <source>
        <strain>LB400</strain>
    </source>
</reference>
<protein>
    <recommendedName>
        <fullName evidence="1">Deoxyuridine 5'-triphosphate nucleotidohydrolase</fullName>
        <shortName evidence="1">dUTPase</shortName>
        <ecNumber evidence="1">3.6.1.23</ecNumber>
    </recommendedName>
    <alternativeName>
        <fullName evidence="1">dUTP pyrophosphatase</fullName>
    </alternativeName>
</protein>
<feature type="chain" id="PRO_1000015459" description="Deoxyuridine 5'-triphosphate nucleotidohydrolase">
    <location>
        <begin position="1"/>
        <end position="148"/>
    </location>
</feature>
<feature type="binding site" evidence="1">
    <location>
        <begin position="67"/>
        <end position="69"/>
    </location>
    <ligand>
        <name>substrate</name>
    </ligand>
</feature>
<feature type="binding site" evidence="1">
    <location>
        <position position="80"/>
    </location>
    <ligand>
        <name>substrate</name>
    </ligand>
</feature>
<feature type="binding site" evidence="1">
    <location>
        <begin position="84"/>
        <end position="86"/>
    </location>
    <ligand>
        <name>substrate</name>
    </ligand>
</feature>
<feature type="binding site" evidence="1">
    <location>
        <position position="94"/>
    </location>
    <ligand>
        <name>substrate</name>
    </ligand>
</feature>
<accession>Q13UV8</accession>
<comment type="function">
    <text evidence="1">This enzyme is involved in nucleotide metabolism: it produces dUMP, the immediate precursor of thymidine nucleotides and it decreases the intracellular concentration of dUTP so that uracil cannot be incorporated into DNA.</text>
</comment>
<comment type="catalytic activity">
    <reaction evidence="1">
        <text>dUTP + H2O = dUMP + diphosphate + H(+)</text>
        <dbReference type="Rhea" id="RHEA:10248"/>
        <dbReference type="ChEBI" id="CHEBI:15377"/>
        <dbReference type="ChEBI" id="CHEBI:15378"/>
        <dbReference type="ChEBI" id="CHEBI:33019"/>
        <dbReference type="ChEBI" id="CHEBI:61555"/>
        <dbReference type="ChEBI" id="CHEBI:246422"/>
        <dbReference type="EC" id="3.6.1.23"/>
    </reaction>
</comment>
<comment type="cofactor">
    <cofactor evidence="1">
        <name>Mg(2+)</name>
        <dbReference type="ChEBI" id="CHEBI:18420"/>
    </cofactor>
</comment>
<comment type="pathway">
    <text evidence="1">Pyrimidine metabolism; dUMP biosynthesis; dUMP from dCTP (dUTP route): step 2/2.</text>
</comment>
<comment type="similarity">
    <text evidence="1">Belongs to the dUTPase family.</text>
</comment>
<proteinExistence type="inferred from homology"/>
<sequence length="148" mass="15808">MKLDLKILDARMRDQLPAYATTGSAGLDLRACLDEPLTLKPGETALVPTGLAIHVGDPGYAALILPRSGLGHKHGIVLGNLVGLIDSDYQGQLMISTWNRGETTFVLNPMERLAQLVIVPVVQAEFNIVDDFETSERGAGGFGSTGKH</sequence>
<organism>
    <name type="scientific">Paraburkholderia xenovorans (strain LB400)</name>
    <dbReference type="NCBI Taxonomy" id="266265"/>
    <lineage>
        <taxon>Bacteria</taxon>
        <taxon>Pseudomonadati</taxon>
        <taxon>Pseudomonadota</taxon>
        <taxon>Betaproteobacteria</taxon>
        <taxon>Burkholderiales</taxon>
        <taxon>Burkholderiaceae</taxon>
        <taxon>Paraburkholderia</taxon>
    </lineage>
</organism>
<dbReference type="EC" id="3.6.1.23" evidence="1"/>
<dbReference type="EMBL" id="CP000270">
    <property type="protein sequence ID" value="ABE32131.1"/>
    <property type="molecule type" value="Genomic_DNA"/>
</dbReference>
<dbReference type="RefSeq" id="WP_007180617.1">
    <property type="nucleotide sequence ID" value="NZ_CP008760.1"/>
</dbReference>
<dbReference type="SMR" id="Q13UV8"/>
<dbReference type="STRING" id="266265.Bxe_A0803"/>
<dbReference type="KEGG" id="bxb:DR64_2968"/>
<dbReference type="KEGG" id="bxe:Bxe_A0803"/>
<dbReference type="eggNOG" id="COG0756">
    <property type="taxonomic scope" value="Bacteria"/>
</dbReference>
<dbReference type="OrthoDB" id="9809956at2"/>
<dbReference type="UniPathway" id="UPA00610">
    <property type="reaction ID" value="UER00666"/>
</dbReference>
<dbReference type="Proteomes" id="UP000001817">
    <property type="component" value="Chromosome 1"/>
</dbReference>
<dbReference type="GO" id="GO:0004170">
    <property type="term" value="F:dUTP diphosphatase activity"/>
    <property type="evidence" value="ECO:0007669"/>
    <property type="project" value="UniProtKB-UniRule"/>
</dbReference>
<dbReference type="GO" id="GO:0000287">
    <property type="term" value="F:magnesium ion binding"/>
    <property type="evidence" value="ECO:0007669"/>
    <property type="project" value="UniProtKB-UniRule"/>
</dbReference>
<dbReference type="GO" id="GO:0006226">
    <property type="term" value="P:dUMP biosynthetic process"/>
    <property type="evidence" value="ECO:0007669"/>
    <property type="project" value="UniProtKB-UniRule"/>
</dbReference>
<dbReference type="GO" id="GO:0046081">
    <property type="term" value="P:dUTP catabolic process"/>
    <property type="evidence" value="ECO:0007669"/>
    <property type="project" value="InterPro"/>
</dbReference>
<dbReference type="CDD" id="cd07557">
    <property type="entry name" value="trimeric_dUTPase"/>
    <property type="match status" value="1"/>
</dbReference>
<dbReference type="FunFam" id="2.70.40.10:FF:000002">
    <property type="entry name" value="dUTP diphosphatase"/>
    <property type="match status" value="1"/>
</dbReference>
<dbReference type="Gene3D" id="2.70.40.10">
    <property type="match status" value="1"/>
</dbReference>
<dbReference type="HAMAP" id="MF_00116">
    <property type="entry name" value="dUTPase_bact"/>
    <property type="match status" value="1"/>
</dbReference>
<dbReference type="InterPro" id="IPR008181">
    <property type="entry name" value="dUTPase"/>
</dbReference>
<dbReference type="InterPro" id="IPR029054">
    <property type="entry name" value="dUTPase-like"/>
</dbReference>
<dbReference type="InterPro" id="IPR036157">
    <property type="entry name" value="dUTPase-like_sf"/>
</dbReference>
<dbReference type="InterPro" id="IPR033704">
    <property type="entry name" value="dUTPase_trimeric"/>
</dbReference>
<dbReference type="NCBIfam" id="TIGR00576">
    <property type="entry name" value="dut"/>
    <property type="match status" value="1"/>
</dbReference>
<dbReference type="NCBIfam" id="NF001862">
    <property type="entry name" value="PRK00601.1"/>
    <property type="match status" value="1"/>
</dbReference>
<dbReference type="PANTHER" id="PTHR11241">
    <property type="entry name" value="DEOXYURIDINE 5'-TRIPHOSPHATE NUCLEOTIDOHYDROLASE"/>
    <property type="match status" value="1"/>
</dbReference>
<dbReference type="PANTHER" id="PTHR11241:SF0">
    <property type="entry name" value="DEOXYURIDINE 5'-TRIPHOSPHATE NUCLEOTIDOHYDROLASE"/>
    <property type="match status" value="1"/>
</dbReference>
<dbReference type="Pfam" id="PF00692">
    <property type="entry name" value="dUTPase"/>
    <property type="match status" value="1"/>
</dbReference>
<dbReference type="SUPFAM" id="SSF51283">
    <property type="entry name" value="dUTPase-like"/>
    <property type="match status" value="1"/>
</dbReference>
<evidence type="ECO:0000255" key="1">
    <source>
        <dbReference type="HAMAP-Rule" id="MF_00116"/>
    </source>
</evidence>
<gene>
    <name evidence="1" type="primary">dut</name>
    <name type="ordered locus">Bxeno_A3593</name>
    <name type="ORF">Bxe_A0803</name>
</gene>
<keyword id="KW-0378">Hydrolase</keyword>
<keyword id="KW-0460">Magnesium</keyword>
<keyword id="KW-0479">Metal-binding</keyword>
<keyword id="KW-0546">Nucleotide metabolism</keyword>
<keyword id="KW-1185">Reference proteome</keyword>
<name>DUT_PARXL</name>